<sequence>MSDPEMGWVPEPPAMTLGASRVELRVSCHGLLDRDTLTKPHPCVLLKLYSDEQWVEVERTEVLRSCSSPVFSRVLAIEYFFEEKQPLQFHVFDAEDGATSPSSDTFLGSTECTLGQIVSQTKVTKPLLLKNGKTAGKSTITIVAEEVSGTNDYVQLTFRAHKLDNKDLFSKSDPFMEIYKTNGDQSDQLVWRTEVVKNNLNPSWEPFRLSLHSLCSCDIHRPLKFLVYDYDSSGKHDFIGEFTSTFQEMQEGTANPGQEMQWDCINPKYRDKKKNYKSSGTVVLAQCTVEKVHTFLDYIMGGCQISFTVAIDFTASNGDPRSSQSLHCLSPRQPNHYLQALRTVGGICQDYDSDKRFPAFGFGARIPPNFEVSHDFAINFDPENPECEEISGVIASYRRCLPQIQLYGPTNVAPIINRVAEPAQREQSTGQATKYSVLLVLTDGVVSDMAETRTAIVRASRLPMSIIIVGVGNADFSDMRLLDGDDGPLRCPKGVPAARDIVQFVPFRDFKDAAPSALAKCVLAEVPRQVVEYYASQGISPGAPRPSTPAMTPSPSP</sequence>
<name>CPNE6_MOUSE</name>
<dbReference type="EMBL" id="AB008893">
    <property type="protein sequence ID" value="BAA75898.1"/>
    <property type="molecule type" value="mRNA"/>
</dbReference>
<dbReference type="EMBL" id="BC050766">
    <property type="protein sequence ID" value="AAH50766.1"/>
    <property type="molecule type" value="mRNA"/>
</dbReference>
<dbReference type="CCDS" id="CCDS27112.1"/>
<dbReference type="RefSeq" id="NP_001129529.1">
    <property type="nucleotide sequence ID" value="NM_001136057.3"/>
</dbReference>
<dbReference type="RefSeq" id="NP_001347122.1">
    <property type="nucleotide sequence ID" value="NM_001360193.1"/>
</dbReference>
<dbReference type="RefSeq" id="NP_034077.1">
    <property type="nucleotide sequence ID" value="NM_009947.4"/>
</dbReference>
<dbReference type="RefSeq" id="XP_006518569.1">
    <property type="nucleotide sequence ID" value="XM_006518506.3"/>
</dbReference>
<dbReference type="SMR" id="Q9Z140"/>
<dbReference type="BioGRID" id="198861">
    <property type="interactions" value="10"/>
</dbReference>
<dbReference type="FunCoup" id="Q9Z140">
    <property type="interactions" value="70"/>
</dbReference>
<dbReference type="IntAct" id="Q9Z140">
    <property type="interactions" value="2"/>
</dbReference>
<dbReference type="MINT" id="Q9Z140"/>
<dbReference type="STRING" id="10090.ENSMUSP00000073847"/>
<dbReference type="GlyGen" id="Q9Z140">
    <property type="glycosylation" value="2 sites, 1 O-linked glycan (1 site)"/>
</dbReference>
<dbReference type="iPTMnet" id="Q9Z140"/>
<dbReference type="PhosphoSitePlus" id="Q9Z140"/>
<dbReference type="SwissPalm" id="Q9Z140"/>
<dbReference type="jPOST" id="Q9Z140"/>
<dbReference type="PaxDb" id="10090-ENSMUSP00000073847"/>
<dbReference type="PeptideAtlas" id="Q9Z140"/>
<dbReference type="ProteomicsDB" id="283938"/>
<dbReference type="Antibodypedia" id="22599">
    <property type="antibodies" value="164 antibodies from 25 providers"/>
</dbReference>
<dbReference type="DNASU" id="12891"/>
<dbReference type="Ensembl" id="ENSMUST00000074225.11">
    <property type="protein sequence ID" value="ENSMUSP00000073847.5"/>
    <property type="gene ID" value="ENSMUSG00000022212.16"/>
</dbReference>
<dbReference type="Ensembl" id="ENSMUST00000163767.8">
    <property type="protein sequence ID" value="ENSMUSP00000126493.2"/>
    <property type="gene ID" value="ENSMUSG00000022212.16"/>
</dbReference>
<dbReference type="Ensembl" id="ENSMUST00000171643.2">
    <property type="protein sequence ID" value="ENSMUSP00000128555.2"/>
    <property type="gene ID" value="ENSMUSG00000022212.16"/>
</dbReference>
<dbReference type="GeneID" id="12891"/>
<dbReference type="KEGG" id="mmu:12891"/>
<dbReference type="UCSC" id="uc007tyr.2">
    <property type="organism name" value="mouse"/>
</dbReference>
<dbReference type="AGR" id="MGI:1334445"/>
<dbReference type="CTD" id="9362"/>
<dbReference type="MGI" id="MGI:1334445">
    <property type="gene designation" value="Cpne6"/>
</dbReference>
<dbReference type="VEuPathDB" id="HostDB:ENSMUSG00000022212"/>
<dbReference type="eggNOG" id="KOG1327">
    <property type="taxonomic scope" value="Eukaryota"/>
</dbReference>
<dbReference type="GeneTree" id="ENSGT00940000161567"/>
<dbReference type="InParanoid" id="Q9Z140"/>
<dbReference type="OMA" id="YKTNRDQ"/>
<dbReference type="OrthoDB" id="5855668at2759"/>
<dbReference type="PhylomeDB" id="Q9Z140"/>
<dbReference type="TreeFam" id="TF316419"/>
<dbReference type="Reactome" id="R-MMU-1483206">
    <property type="pathway name" value="Glycerophospholipid biosynthesis"/>
</dbReference>
<dbReference type="BioGRID-ORCS" id="12891">
    <property type="hits" value="1 hit in 79 CRISPR screens"/>
</dbReference>
<dbReference type="PRO" id="PR:Q9Z140"/>
<dbReference type="Proteomes" id="UP000000589">
    <property type="component" value="Chromosome 14"/>
</dbReference>
<dbReference type="RNAct" id="Q9Z140">
    <property type="molecule type" value="protein"/>
</dbReference>
<dbReference type="Bgee" id="ENSMUSG00000022212">
    <property type="expression patterns" value="Expressed in CA3 field of hippocampus and 116 other cell types or tissues"/>
</dbReference>
<dbReference type="ExpressionAtlas" id="Q9Z140">
    <property type="expression patterns" value="baseline and differential"/>
</dbReference>
<dbReference type="GO" id="GO:0030424">
    <property type="term" value="C:axon"/>
    <property type="evidence" value="ECO:0000314"/>
    <property type="project" value="MGI"/>
</dbReference>
<dbReference type="GO" id="GO:0045334">
    <property type="term" value="C:clathrin-coated endocytic vesicle"/>
    <property type="evidence" value="ECO:0000314"/>
    <property type="project" value="UniProtKB"/>
</dbReference>
<dbReference type="GO" id="GO:0005737">
    <property type="term" value="C:cytoplasm"/>
    <property type="evidence" value="ECO:0000314"/>
    <property type="project" value="UniProtKB"/>
</dbReference>
<dbReference type="GO" id="GO:0030425">
    <property type="term" value="C:dendrite"/>
    <property type="evidence" value="ECO:0000314"/>
    <property type="project" value="MGI"/>
</dbReference>
<dbReference type="GO" id="GO:0005768">
    <property type="term" value="C:endosome"/>
    <property type="evidence" value="ECO:0007669"/>
    <property type="project" value="UniProtKB-SubCell"/>
</dbReference>
<dbReference type="GO" id="GO:0016020">
    <property type="term" value="C:membrane"/>
    <property type="evidence" value="ECO:0000314"/>
    <property type="project" value="MGI"/>
</dbReference>
<dbReference type="GO" id="GO:0043204">
    <property type="term" value="C:perikaryon"/>
    <property type="evidence" value="ECO:0007669"/>
    <property type="project" value="UniProtKB-SubCell"/>
</dbReference>
<dbReference type="GO" id="GO:0005886">
    <property type="term" value="C:plasma membrane"/>
    <property type="evidence" value="ECO:0000314"/>
    <property type="project" value="UniProtKB"/>
</dbReference>
<dbReference type="GO" id="GO:0005544">
    <property type="term" value="F:calcium-dependent phospholipid binding"/>
    <property type="evidence" value="ECO:0007669"/>
    <property type="project" value="InterPro"/>
</dbReference>
<dbReference type="GO" id="GO:0046872">
    <property type="term" value="F:metal ion binding"/>
    <property type="evidence" value="ECO:0007669"/>
    <property type="project" value="UniProtKB-KW"/>
</dbReference>
<dbReference type="GO" id="GO:0001786">
    <property type="term" value="F:phosphatidylserine binding"/>
    <property type="evidence" value="ECO:0000314"/>
    <property type="project" value="MGI"/>
</dbReference>
<dbReference type="GO" id="GO:0030154">
    <property type="term" value="P:cell differentiation"/>
    <property type="evidence" value="ECO:0007669"/>
    <property type="project" value="UniProtKB-KW"/>
</dbReference>
<dbReference type="GO" id="GO:0071277">
    <property type="term" value="P:cellular response to calcium ion"/>
    <property type="evidence" value="ECO:0000315"/>
    <property type="project" value="UniProtKB"/>
</dbReference>
<dbReference type="GO" id="GO:1903861">
    <property type="term" value="P:positive regulation of dendrite extension"/>
    <property type="evidence" value="ECO:0007669"/>
    <property type="project" value="Ensembl"/>
</dbReference>
<dbReference type="GO" id="GO:0098974">
    <property type="term" value="P:postsynaptic actin cytoskeleton organization"/>
    <property type="evidence" value="ECO:0000314"/>
    <property type="project" value="SynGO"/>
</dbReference>
<dbReference type="CDD" id="cd04048">
    <property type="entry name" value="C2A_Copine"/>
    <property type="match status" value="1"/>
</dbReference>
<dbReference type="CDD" id="cd04047">
    <property type="entry name" value="C2B_Copine"/>
    <property type="match status" value="1"/>
</dbReference>
<dbReference type="CDD" id="cd01459">
    <property type="entry name" value="vWA_copine_like"/>
    <property type="match status" value="1"/>
</dbReference>
<dbReference type="FunFam" id="2.60.40.150:FF:000063">
    <property type="entry name" value="Copine 4"/>
    <property type="match status" value="1"/>
</dbReference>
<dbReference type="FunFam" id="2.60.40.150:FF:000126">
    <property type="entry name" value="Copine 6"/>
    <property type="match status" value="1"/>
</dbReference>
<dbReference type="Gene3D" id="2.60.40.150">
    <property type="entry name" value="C2 domain"/>
    <property type="match status" value="2"/>
</dbReference>
<dbReference type="InterPro" id="IPR000008">
    <property type="entry name" value="C2_dom"/>
</dbReference>
<dbReference type="InterPro" id="IPR035892">
    <property type="entry name" value="C2_domain_sf"/>
</dbReference>
<dbReference type="InterPro" id="IPR037768">
    <property type="entry name" value="C2B_Copine"/>
</dbReference>
<dbReference type="InterPro" id="IPR045052">
    <property type="entry name" value="Copine"/>
</dbReference>
<dbReference type="InterPro" id="IPR010734">
    <property type="entry name" value="Copine_C"/>
</dbReference>
<dbReference type="InterPro" id="IPR002035">
    <property type="entry name" value="VWF_A"/>
</dbReference>
<dbReference type="InterPro" id="IPR036465">
    <property type="entry name" value="vWFA_dom_sf"/>
</dbReference>
<dbReference type="PANTHER" id="PTHR10857">
    <property type="entry name" value="COPINE"/>
    <property type="match status" value="1"/>
</dbReference>
<dbReference type="PANTHER" id="PTHR10857:SF5">
    <property type="entry name" value="COPINE-6"/>
    <property type="match status" value="1"/>
</dbReference>
<dbReference type="Pfam" id="PF00168">
    <property type="entry name" value="C2"/>
    <property type="match status" value="2"/>
</dbReference>
<dbReference type="Pfam" id="PF07002">
    <property type="entry name" value="Copine"/>
    <property type="match status" value="1"/>
</dbReference>
<dbReference type="SMART" id="SM00239">
    <property type="entry name" value="C2"/>
    <property type="match status" value="2"/>
</dbReference>
<dbReference type="SMART" id="SM00327">
    <property type="entry name" value="VWA"/>
    <property type="match status" value="1"/>
</dbReference>
<dbReference type="SUPFAM" id="SSF49562">
    <property type="entry name" value="C2 domain (Calcium/lipid-binding domain, CaLB)"/>
    <property type="match status" value="2"/>
</dbReference>
<dbReference type="SUPFAM" id="SSF53300">
    <property type="entry name" value="vWA-like"/>
    <property type="match status" value="1"/>
</dbReference>
<dbReference type="PROSITE" id="PS50004">
    <property type="entry name" value="C2"/>
    <property type="match status" value="2"/>
</dbReference>
<dbReference type="PROSITE" id="PS50234">
    <property type="entry name" value="VWFA"/>
    <property type="match status" value="1"/>
</dbReference>
<organism>
    <name type="scientific">Mus musculus</name>
    <name type="common">Mouse</name>
    <dbReference type="NCBI Taxonomy" id="10090"/>
    <lineage>
        <taxon>Eukaryota</taxon>
        <taxon>Metazoa</taxon>
        <taxon>Chordata</taxon>
        <taxon>Craniata</taxon>
        <taxon>Vertebrata</taxon>
        <taxon>Euteleostomi</taxon>
        <taxon>Mammalia</taxon>
        <taxon>Eutheria</taxon>
        <taxon>Euarchontoglires</taxon>
        <taxon>Glires</taxon>
        <taxon>Rodentia</taxon>
        <taxon>Myomorpha</taxon>
        <taxon>Muroidea</taxon>
        <taxon>Muridae</taxon>
        <taxon>Murinae</taxon>
        <taxon>Mus</taxon>
        <taxon>Mus</taxon>
    </lineage>
</organism>
<reference key="1">
    <citation type="journal article" date="1998" name="FEBS Lett.">
        <title>N-copine: a novel two C2-domain-containing protein with neuronal activity-regulated expression.</title>
        <authorList>
            <person name="Nakayama T."/>
            <person name="Yaoi T."/>
            <person name="Yasui M."/>
            <person name="Kuwajima G."/>
        </authorList>
    </citation>
    <scope>NUCLEOTIDE SEQUENCE [MRNA]</scope>
    <scope>INDUCTION</scope>
    <scope>TISSUE SPECIFICITY</scope>
    <source>
        <tissue>Brain</tissue>
    </source>
</reference>
<reference key="2">
    <citation type="journal article" date="2004" name="Genome Res.">
        <title>The status, quality, and expansion of the NIH full-length cDNA project: the Mammalian Gene Collection (MGC).</title>
        <authorList>
            <consortium name="The MGC Project Team"/>
        </authorList>
    </citation>
    <scope>NUCLEOTIDE SEQUENCE [LARGE SCALE MRNA]</scope>
    <source>
        <tissue>Brain</tissue>
    </source>
</reference>
<reference key="3">
    <citation type="journal article" date="1999" name="FEBS Lett.">
        <title>Ca2(+)-dependent interaction of N-copine, a member of the two C2 domain protein family, with OS-9, the product of a gene frequently amplified in osteosarcoma.</title>
        <authorList>
            <person name="Nakayama T."/>
            <person name="Yaoi T."/>
            <person name="Kuwajima G."/>
            <person name="Yoshie O."/>
            <person name="Sakata T."/>
        </authorList>
    </citation>
    <scope>INTERACTION WITH OS9</scope>
</reference>
<reference key="4">
    <citation type="journal article" date="1999" name="J. Neurochem.">
        <title>Localization and subcellular distribution of N-copine in mouse brain.</title>
        <authorList>
            <person name="Nakayama T."/>
            <person name="Yaoi T."/>
            <person name="Kuwajima G."/>
        </authorList>
    </citation>
    <scope>FUNCTION</scope>
    <scope>SUBCELLULAR LOCATION</scope>
    <scope>DOMAIN</scope>
    <scope>TISSUE SPECIFICITY</scope>
</reference>
<reference key="5">
    <citation type="journal article" date="2010" name="Cell">
        <title>A tissue-specific atlas of mouse protein phosphorylation and expression.</title>
        <authorList>
            <person name="Huttlin E.L."/>
            <person name="Jedrychowski M.P."/>
            <person name="Elias J.E."/>
            <person name="Goswami T."/>
            <person name="Rad R."/>
            <person name="Beausoleil S.A."/>
            <person name="Villen J."/>
            <person name="Haas W."/>
            <person name="Sowa M.E."/>
            <person name="Gygi S.P."/>
        </authorList>
    </citation>
    <scope>IDENTIFICATION BY MASS SPECTROMETRY [LARGE SCALE ANALYSIS]</scope>
    <source>
        <tissue>Brain</tissue>
        <tissue>Liver</tissue>
    </source>
</reference>
<reference key="6">
    <citation type="journal article" date="2010" name="FEBS J.">
        <title>Copines-1, -2, -3, -6 and -7 show different calcium-dependent intracellular membrane translocation and targeting.</title>
        <authorList>
            <person name="Perestenko P.V."/>
            <person name="Pooler A.M."/>
            <person name="Noorbakhshnia M."/>
            <person name="Gray A."/>
            <person name="Bauccio C."/>
            <person name="Jeffrey McIlhinney R.A."/>
        </authorList>
    </citation>
    <scope>SUBCELLULAR LOCATION</scope>
    <scope>DOMAIN</scope>
</reference>
<reference key="7">
    <citation type="journal article" date="2015" name="FEBS J.">
        <title>The second C2-domain of copines -2, -6 and -7 is responsible for their calcium-dependent membrane association.</title>
        <authorList>
            <person name="Perestenko P."/>
            <person name="Watanabe M."/>
            <person name="Beusnard-Bee T."/>
            <person name="Guna P."/>
            <person name="McIlhinney J."/>
        </authorList>
    </citation>
    <scope>SUBCELLULAR LOCATION</scope>
    <scope>DOMAIN</scope>
    <scope>MUTAGENESIS OF ASP-33; ASP-35; ASP-93; ASP-96; ASP-167; ASP-173; ASP-229; ASP-231; LYS-272; LYS-273; LYS-274; VAL-282; VAL-283; LEU-284; GLN-286; CYS-287 AND THR-288</scope>
</reference>
<protein>
    <recommendedName>
        <fullName evidence="11">Copine-6</fullName>
    </recommendedName>
    <alternativeName>
        <fullName evidence="2 12">Copine VI</fullName>
    </alternativeName>
    <alternativeName>
        <fullName evidence="10">Neuronal-copine</fullName>
        <shortName evidence="10">N-copine</shortName>
    </alternativeName>
</protein>
<evidence type="ECO:0000250" key="1">
    <source>
        <dbReference type="UniProtKB" id="O95741"/>
    </source>
</evidence>
<evidence type="ECO:0000250" key="2">
    <source>
        <dbReference type="UniProtKB" id="Q99829"/>
    </source>
</evidence>
<evidence type="ECO:0000255" key="3">
    <source>
        <dbReference type="PROSITE-ProRule" id="PRU00041"/>
    </source>
</evidence>
<evidence type="ECO:0000255" key="4">
    <source>
        <dbReference type="PROSITE-ProRule" id="PRU00219"/>
    </source>
</evidence>
<evidence type="ECO:0000269" key="5">
    <source>
    </source>
</evidence>
<evidence type="ECO:0000269" key="6">
    <source>
    </source>
</evidence>
<evidence type="ECO:0000269" key="7">
    <source>
    </source>
</evidence>
<evidence type="ECO:0000269" key="8">
    <source>
    </source>
</evidence>
<evidence type="ECO:0000269" key="9">
    <source>
    </source>
</evidence>
<evidence type="ECO:0000303" key="10">
    <source>
    </source>
</evidence>
<evidence type="ECO:0000305" key="11"/>
<evidence type="ECO:0000312" key="12">
    <source>
        <dbReference type="MGI" id="MGI:1334445"/>
    </source>
</evidence>
<accession>Q9Z140</accession>
<comment type="function">
    <text evidence="1 9">Calcium-dependent phospholipid-binding protein that plays a role in calcium-mediated intracellular processes. Binds phospholipid membranes in a calcium-dependent manner (PubMed:9886090). Plays a role in dendrite formation by melanocytes (By similarity).</text>
</comment>
<comment type="cofactor">
    <cofactor evidence="3">
        <name>Ca(2+)</name>
        <dbReference type="ChEBI" id="CHEBI:29108"/>
    </cofactor>
</comment>
<comment type="subunit">
    <text evidence="1 5">Interacts (via second C2 domain) with OS9 (via C-terminus); this interaction occurs in a calcium-dependent manner in vitro (PubMed:10403379). May interact with NECAB1 (By similarity).</text>
</comment>
<comment type="subcellular location">
    <subcellularLocation>
        <location evidence="6 9">Cytoplasm</location>
    </subcellularLocation>
    <subcellularLocation>
        <location evidence="6 7">Cell membrane</location>
    </subcellularLocation>
    <subcellularLocation>
        <location evidence="6">Endosome</location>
    </subcellularLocation>
    <subcellularLocation>
        <location evidence="6">Cytoplasmic vesicle</location>
        <location evidence="6">Clathrin-coated vesicle</location>
    </subcellularLocation>
    <subcellularLocation>
        <location evidence="9">Perikaryon</location>
    </subcellularLocation>
    <subcellularLocation>
        <location evidence="9">Cell projection</location>
        <location evidence="9">Dendrite</location>
    </subcellularLocation>
    <text evidence="6 7 9">Mainly cytoplasmic in absence of calcium. Associated predominantly with membranes in presence of calcium (PubMed:9886090). Translocates to the cell membrane in a calcium-dependent manner (PubMed:21087455, PubMed:26175110). Colocalized with transferrin in intracellular clathrin-coated membrane vesicles in a calcium-dependent manner (PubMed:21087455).</text>
</comment>
<comment type="tissue specificity">
    <text evidence="8 9">Expressed in the brain (PubMed:9645480). Expressed in pyramidal cells, granule cells, and neurons in the dentate gyrus of the hippocampus and in granule cells of the olfactory bulb (at protein level). Expressed in pyramidal cells of the CA1-CA3 regions, in granule cells of the dentate gyrus, in granule cells of the olfactory bulbs, in the mitral cell layer and in neurons of the cerebral cortex layer II, brainstem and spinal cord (PubMed:9886090). Not detected in glial cells (PubMed:9645480, PubMed:9886090).</text>
</comment>
<comment type="induction">
    <text evidence="8">Up-regulated by long-term potentiation (PubMed:9645480). Up-regulated by kainate in an NMDA-type glutamate receptor-dependent manner (PubMed:9645480).</text>
</comment>
<comment type="domain">
    <text evidence="6 7 9">The C2 domain 1 binds phospholipids in a calcium-independent manner and is not necessary for calcium-mediated translocation and association to the plasma membrane (PubMed:26175110, PubMed:9886090). The C2 domain 2 binds phospholipids in a calcium-dependent manner and is necessary for calcium-mediated translocation and association to the plasma membrane (PubMed:26175110, PubMed:9886090). The linker region contributes to the calcium-dependent translocation and association to the plasma membrane (PubMed:21087455, PubMed:26175110). The VWFA domain is necessary for association with intracellular clathrin-coated vesicles in a calcium-dependent manner (PubMed:21087455).</text>
</comment>
<comment type="similarity">
    <text evidence="11">Belongs to the copine family.</text>
</comment>
<proteinExistence type="evidence at protein level"/>
<gene>
    <name evidence="12" type="primary">Cpne6</name>
</gene>
<feature type="chain" id="PRO_0000144846" description="Copine-6">
    <location>
        <begin position="1"/>
        <end position="557"/>
    </location>
</feature>
<feature type="domain" description="C2 1" evidence="3">
    <location>
        <begin position="1"/>
        <end position="127"/>
    </location>
</feature>
<feature type="domain" description="C2 2" evidence="3">
    <location>
        <begin position="134"/>
        <end position="263"/>
    </location>
</feature>
<feature type="domain" description="VWFA" evidence="4">
    <location>
        <begin position="306"/>
        <end position="526"/>
    </location>
</feature>
<feature type="region of interest" description="Linker region" evidence="6 7">
    <location>
        <begin position="244"/>
        <end position="303"/>
    </location>
</feature>
<feature type="binding site" evidence="3">
    <location>
        <position position="167"/>
    </location>
    <ligand>
        <name>Ca(2+)</name>
        <dbReference type="ChEBI" id="CHEBI:29108"/>
        <label>1</label>
    </ligand>
</feature>
<feature type="binding site" evidence="3">
    <location>
        <position position="167"/>
    </location>
    <ligand>
        <name>Ca(2+)</name>
        <dbReference type="ChEBI" id="CHEBI:29108"/>
        <label>2</label>
    </ligand>
</feature>
<feature type="binding site" evidence="3">
    <location>
        <position position="173"/>
    </location>
    <ligand>
        <name>Ca(2+)</name>
        <dbReference type="ChEBI" id="CHEBI:29108"/>
        <label>1</label>
    </ligand>
</feature>
<feature type="binding site" evidence="3">
    <location>
        <position position="229"/>
    </location>
    <ligand>
        <name>Ca(2+)</name>
        <dbReference type="ChEBI" id="CHEBI:29108"/>
        <label>1</label>
    </ligand>
</feature>
<feature type="binding site" evidence="3">
    <location>
        <position position="229"/>
    </location>
    <ligand>
        <name>Ca(2+)</name>
        <dbReference type="ChEBI" id="CHEBI:29108"/>
        <label>2</label>
    </ligand>
</feature>
<feature type="binding site" evidence="3">
    <location>
        <position position="231"/>
    </location>
    <ligand>
        <name>Ca(2+)</name>
        <dbReference type="ChEBI" id="CHEBI:29108"/>
        <label>1</label>
    </ligand>
</feature>
<feature type="binding site" evidence="3">
    <location>
        <position position="231"/>
    </location>
    <ligand>
        <name>Ca(2+)</name>
        <dbReference type="ChEBI" id="CHEBI:29108"/>
        <label>2</label>
    </ligand>
</feature>
<feature type="binding site" evidence="3">
    <location>
        <position position="237"/>
    </location>
    <ligand>
        <name>Ca(2+)</name>
        <dbReference type="ChEBI" id="CHEBI:29108"/>
        <label>2</label>
    </ligand>
</feature>
<feature type="mutagenesis site" description="Does not inhibit calcium-dependent translocation to the cell membrane; when associated with N-35; N-93 and N-96." evidence="7">
    <original>D</original>
    <variation>N</variation>
    <location>
        <position position="33"/>
    </location>
</feature>
<feature type="mutagenesis site" description="Does not inhibit calcium-dependent translocation to the cell membrane; when associated with N-33; N-93 and N-96." evidence="7">
    <original>D</original>
    <variation>N</variation>
    <location>
        <position position="35"/>
    </location>
</feature>
<feature type="mutagenesis site" description="Does not inhibit calcium-dependent translocation to the cell membrane; when associated with N-33; N-35 and N-96." evidence="7">
    <original>D</original>
    <variation>N</variation>
    <location>
        <position position="93"/>
    </location>
</feature>
<feature type="mutagenesis site" description="Does not inhibit calcium-dependent translocation to the cell membrane; when associated with N-33; N-35 and N-93." evidence="7">
    <original>D</original>
    <variation>N</variation>
    <location>
        <position position="96"/>
    </location>
</feature>
<feature type="mutagenesis site" description="Inhibits strongly calcium-dependent translocation to the cell membrane. Inhibits strongly calcium-dependent translocation to the cell membrane; when associated with N-173. Leads to the constitutive (calcium-independent) attachment to the cell membrane; when associated with N-173; N-229 and N-231." evidence="7">
    <original>D</original>
    <variation>N</variation>
    <location>
        <position position="167"/>
    </location>
</feature>
<feature type="mutagenesis site" description="Inhibits strongly calcium-dependent translocation to the cell membrane. Inhibits strongly calcium-dependent translocation to the cell membrane; when associated with N-167. Leads to the constitutive (calcium-independent) attachment to the cell membrane; when associated with N-167; N-229 and N-231." evidence="7">
    <original>D</original>
    <variation>N</variation>
    <location>
        <position position="173"/>
    </location>
</feature>
<feature type="mutagenesis site" description="Inhibits strongly calcium-dependent translocation to the cell membrane; when associated with N-231. Leads to the constitutive (calcium-independent) attachment to the cell membrane; when associated with N-167; N-173 and N-231." evidence="7">
    <original>D</original>
    <variation>N</variation>
    <location>
        <position position="229"/>
    </location>
</feature>
<feature type="mutagenesis site" description="Does not inhibit calcium-dependent translocation to the cell membrane. Inhibits strongly calcium-dependent translocation to the cell membrane; when associated with N-229. Leads to the constitutive (calcium-independent) attachment to the cell membrane; when associated with N-167; N-173 and N-229." evidence="7">
    <original>D</original>
    <variation>N</variation>
    <location>
        <position position="231"/>
    </location>
</feature>
<feature type="mutagenesis site" description="Does not inhibit calcium-dependent translocation to the cell membrane; when associated with A-273 and A-274." evidence="7">
    <original>K</original>
    <variation>A</variation>
    <location>
        <position position="272"/>
    </location>
</feature>
<feature type="mutagenesis site" description="Does not inhibit calcium-dependent translocation to the cell membrane; when associated with A-272 and A-274." evidence="7">
    <original>K</original>
    <variation>A</variation>
    <location>
        <position position="273"/>
    </location>
</feature>
<feature type="mutagenesis site" description="Does not inhibit calcium-dependent translocation to the cell membrane; when associated with A-272 and A-273." evidence="7">
    <original>K</original>
    <variation>A</variation>
    <location>
        <position position="274"/>
    </location>
</feature>
<feature type="mutagenesis site" description="Does not inhibit calcium-dependent translocation to the cell membrane. Inhibits calcium-dependent translocation to the cell membrane; when associated with G-283 and G-284." evidence="7">
    <original>V</original>
    <variation>G</variation>
    <location>
        <position position="282"/>
    </location>
</feature>
<feature type="mutagenesis site" description="Inhibits calcium-dependent translocation to the cell membrane; when associated with S-283 and S-284." evidence="7">
    <original>V</original>
    <variation>S</variation>
    <location>
        <position position="282"/>
    </location>
</feature>
<feature type="mutagenesis site" description="Does not inhibit calcium-dependent translocation to the cell membrane. Inhibits calcium-dependent translocation to the cell membrane; when associated with G-282 and G-284." evidence="7">
    <original>V</original>
    <variation>G</variation>
    <location>
        <position position="283"/>
    </location>
</feature>
<feature type="mutagenesis site" description="Inhibits calcium-dependent translocation to the cell membrane; when associated with S-282 and S-284." evidence="7">
    <original>V</original>
    <variation>S</variation>
    <location>
        <position position="283"/>
    </location>
</feature>
<feature type="mutagenesis site" description="Inhibits partially calcium-dependent translocation to the cell membrane. Inhibits calcium-dependent translocation to the cell membrane; when associated with G-282 and G-283." evidence="7">
    <original>L</original>
    <variation>G</variation>
    <location>
        <position position="284"/>
    </location>
</feature>
<feature type="mutagenesis site" description="Inhibits calcium-dependent translocation to the cell membrane; when associated with S-282 and S-283." evidence="7">
    <original>L</original>
    <variation>S</variation>
    <location>
        <position position="284"/>
    </location>
</feature>
<feature type="mutagenesis site" description="Does not inhibit calcium-dependent translocation to the cell membrane; when associated with G-287 and G-288." evidence="7">
    <original>Q</original>
    <variation>A</variation>
    <location>
        <position position="286"/>
    </location>
</feature>
<feature type="mutagenesis site" description="Does not inhibit calcium-dependent translocation to the cell membrane; when associated with G-286 and G-288." evidence="7">
    <original>C</original>
    <variation>A</variation>
    <location>
        <position position="287"/>
    </location>
</feature>
<feature type="mutagenesis site" description="Does not inhibit calcium-dependent translocation to the cell membrane; when associated with G-286 and G-287." evidence="7">
    <original>T</original>
    <variation>A</variation>
    <location>
        <position position="288"/>
    </location>
</feature>
<keyword id="KW-0106">Calcium</keyword>
<keyword id="KW-1003">Cell membrane</keyword>
<keyword id="KW-0966">Cell projection</keyword>
<keyword id="KW-0963">Cytoplasm</keyword>
<keyword id="KW-0968">Cytoplasmic vesicle</keyword>
<keyword id="KW-0221">Differentiation</keyword>
<keyword id="KW-0967">Endosome</keyword>
<keyword id="KW-0472">Membrane</keyword>
<keyword id="KW-0479">Metal-binding</keyword>
<keyword id="KW-1185">Reference proteome</keyword>
<keyword id="KW-0677">Repeat</keyword>